<organism>
    <name type="scientific">Medicago truncatula</name>
    <name type="common">Barrel medic</name>
    <name type="synonym">Medicago tribuloides</name>
    <dbReference type="NCBI Taxonomy" id="3880"/>
    <lineage>
        <taxon>Eukaryota</taxon>
        <taxon>Viridiplantae</taxon>
        <taxon>Streptophyta</taxon>
        <taxon>Embryophyta</taxon>
        <taxon>Tracheophyta</taxon>
        <taxon>Spermatophyta</taxon>
        <taxon>Magnoliopsida</taxon>
        <taxon>eudicotyledons</taxon>
        <taxon>Gunneridae</taxon>
        <taxon>Pentapetalae</taxon>
        <taxon>rosids</taxon>
        <taxon>fabids</taxon>
        <taxon>Fabales</taxon>
        <taxon>Fabaceae</taxon>
        <taxon>Papilionoideae</taxon>
        <taxon>50 kb inversion clade</taxon>
        <taxon>NPAAA clade</taxon>
        <taxon>Hologalegina</taxon>
        <taxon>IRL clade</taxon>
        <taxon>Trifolieae</taxon>
        <taxon>Medicago</taxon>
    </lineage>
</organism>
<feature type="chain" id="PRO_0000434144" description="RNA-binding protein 1">
    <location>
        <begin position="1"/>
        <end position="261"/>
    </location>
</feature>
<feature type="domain" description="RRM" evidence="1">
    <location>
        <begin position="151"/>
        <end position="236"/>
    </location>
</feature>
<feature type="region of interest" description="Disordered" evidence="2">
    <location>
        <begin position="1"/>
        <end position="38"/>
    </location>
</feature>
<feature type="region of interest" description="Disordered" evidence="2">
    <location>
        <begin position="232"/>
        <end position="261"/>
    </location>
</feature>
<feature type="compositionally biased region" description="Gly residues" evidence="2">
    <location>
        <begin position="240"/>
        <end position="254"/>
    </location>
</feature>
<gene>
    <name evidence="4" type="primary">RBP1</name>
    <name type="ordered locus">MTR_6g034835</name>
    <name evidence="5" type="ORF">MTR_056s0008</name>
</gene>
<keyword id="KW-0539">Nucleus</keyword>
<keyword id="KW-1185">Reference proteome</keyword>
<keyword id="KW-0694">RNA-binding</keyword>
<protein>
    <recommendedName>
        <fullName evidence="4">RNA-binding protein 1</fullName>
        <shortName evidence="4">MtRBP1</shortName>
    </recommendedName>
</protein>
<evidence type="ECO:0000255" key="1">
    <source>
        <dbReference type="PROSITE-ProRule" id="PRU00176"/>
    </source>
</evidence>
<evidence type="ECO:0000256" key="2">
    <source>
        <dbReference type="SAM" id="MobiDB-lite"/>
    </source>
</evidence>
<evidence type="ECO:0000269" key="3">
    <source>
    </source>
</evidence>
<evidence type="ECO:0000303" key="4">
    <source>
    </source>
</evidence>
<evidence type="ECO:0000312" key="5">
    <source>
        <dbReference type="EMBL" id="AES83897.1"/>
    </source>
</evidence>
<name>RBP1_MEDTR</name>
<reference key="1">
    <citation type="journal article" date="2004" name="Plant Cell">
        <title>Enod40, a short open reading frame-containing mRNA, induces cytoplasmic localization of a nuclear RNA binding protein in Medicago truncatula.</title>
        <authorList>
            <person name="Campalans A."/>
            <person name="Kondorosi A."/>
            <person name="Crespi M."/>
        </authorList>
    </citation>
    <scope>NUCLEOTIDE SEQUENCE [MRNA]</scope>
    <scope>FUNCTION</scope>
    <scope>TISSUE SPECIFICITY</scope>
    <scope>DEVELOPMENTAL STAGE</scope>
    <scope>SUBCELLULAR LOCATION</scope>
    <source>
        <strain>cv. R108</strain>
        <tissue>Root nodule</tissue>
    </source>
</reference>
<reference key="2">
    <citation type="journal article" date="2011" name="Nature">
        <title>The Medicago genome provides insight into the evolution of rhizobial symbioses.</title>
        <authorList>
            <person name="Young N.D."/>
            <person name="Debelle F."/>
            <person name="Oldroyd G.E.D."/>
            <person name="Geurts R."/>
            <person name="Cannon S.B."/>
            <person name="Udvardi M.K."/>
            <person name="Benedito V.A."/>
            <person name="Mayer K.F.X."/>
            <person name="Gouzy J."/>
            <person name="Schoof H."/>
            <person name="Van de Peer Y."/>
            <person name="Proost S."/>
            <person name="Cook D.R."/>
            <person name="Meyers B.C."/>
            <person name="Spannagl M."/>
            <person name="Cheung F."/>
            <person name="De Mita S."/>
            <person name="Krishnakumar V."/>
            <person name="Gundlach H."/>
            <person name="Zhou S."/>
            <person name="Mudge J."/>
            <person name="Bharti A.K."/>
            <person name="Murray J.D."/>
            <person name="Naoumkina M.A."/>
            <person name="Rosen B."/>
            <person name="Silverstein K.A.T."/>
            <person name="Tang H."/>
            <person name="Rombauts S."/>
            <person name="Zhao P.X."/>
            <person name="Zhou P."/>
            <person name="Barbe V."/>
            <person name="Bardou P."/>
            <person name="Bechner M."/>
            <person name="Bellec A."/>
            <person name="Berger A."/>
            <person name="Berges H."/>
            <person name="Bidwell S."/>
            <person name="Bisseling T."/>
            <person name="Choisne N."/>
            <person name="Couloux A."/>
            <person name="Denny R."/>
            <person name="Deshpande S."/>
            <person name="Dai X."/>
            <person name="Doyle J.J."/>
            <person name="Dudez A.-M."/>
            <person name="Farmer A.D."/>
            <person name="Fouteau S."/>
            <person name="Franken C."/>
            <person name="Gibelin C."/>
            <person name="Gish J."/>
            <person name="Goldstein S."/>
            <person name="Gonzalez A.J."/>
            <person name="Green P.J."/>
            <person name="Hallab A."/>
            <person name="Hartog M."/>
            <person name="Hua A."/>
            <person name="Humphray S.J."/>
            <person name="Jeong D.-H."/>
            <person name="Jing Y."/>
            <person name="Jocker A."/>
            <person name="Kenton S.M."/>
            <person name="Kim D.-J."/>
            <person name="Klee K."/>
            <person name="Lai H."/>
            <person name="Lang C."/>
            <person name="Lin S."/>
            <person name="Macmil S.L."/>
            <person name="Magdelenat G."/>
            <person name="Matthews L."/>
            <person name="McCorrison J."/>
            <person name="Monaghan E.L."/>
            <person name="Mun J.-H."/>
            <person name="Najar F.Z."/>
            <person name="Nicholson C."/>
            <person name="Noirot C."/>
            <person name="O'Bleness M."/>
            <person name="Paule C.R."/>
            <person name="Poulain J."/>
            <person name="Prion F."/>
            <person name="Qin B."/>
            <person name="Qu C."/>
            <person name="Retzel E.F."/>
            <person name="Riddle C."/>
            <person name="Sallet E."/>
            <person name="Samain S."/>
            <person name="Samson N."/>
            <person name="Sanders I."/>
            <person name="Saurat O."/>
            <person name="Scarpelli C."/>
            <person name="Schiex T."/>
            <person name="Segurens B."/>
            <person name="Severin A.J."/>
            <person name="Sherrier D.J."/>
            <person name="Shi R."/>
            <person name="Sims S."/>
            <person name="Singer S.R."/>
            <person name="Sinharoy S."/>
            <person name="Sterck L."/>
            <person name="Viollet A."/>
            <person name="Wang B.-B."/>
            <person name="Wang K."/>
            <person name="Wang M."/>
            <person name="Wang X."/>
            <person name="Warfsmann J."/>
            <person name="Weissenbach J."/>
            <person name="White D.D."/>
            <person name="White J.D."/>
            <person name="Wiley G.B."/>
            <person name="Wincker P."/>
            <person name="Xing Y."/>
            <person name="Yang L."/>
            <person name="Yao Z."/>
            <person name="Ying F."/>
            <person name="Zhai J."/>
            <person name="Zhou L."/>
            <person name="Zuber A."/>
            <person name="Denarie J."/>
            <person name="Dixon R.A."/>
            <person name="May G.D."/>
            <person name="Schwartz D.C."/>
            <person name="Rogers J."/>
            <person name="Quetier F."/>
            <person name="Town C.D."/>
            <person name="Roe B.A."/>
        </authorList>
    </citation>
    <scope>NUCLEOTIDE SEQUENCE [LARGE SCALE GENOMIC DNA]</scope>
    <source>
        <strain>cv. Jemalong A17</strain>
    </source>
</reference>
<reference key="3">
    <citation type="journal article" date="2014" name="BMC Genomics">
        <title>An improved genome release (version Mt4.0) for the model legume Medicago truncatula.</title>
        <authorList>
            <person name="Tang H."/>
            <person name="Krishnakumar V."/>
            <person name="Bidwell S."/>
            <person name="Rosen B."/>
            <person name="Chan A."/>
            <person name="Zhou S."/>
            <person name="Gentzbittel L."/>
            <person name="Childs K.L."/>
            <person name="Yandell M."/>
            <person name="Gundlach H."/>
            <person name="Mayer K.F."/>
            <person name="Schwartz D.C."/>
            <person name="Town C.D."/>
        </authorList>
    </citation>
    <scope>GENOME REANNOTATION</scope>
    <source>
        <strain>cv. Jemalong A17</strain>
    </source>
</reference>
<dbReference type="EMBL" id="AJ508392">
    <property type="protein sequence ID" value="CAD48198.1"/>
    <property type="molecule type" value="mRNA"/>
</dbReference>
<dbReference type="EMBL" id="GL982906">
    <property type="protein sequence ID" value="AES83897.1"/>
    <property type="molecule type" value="Genomic_DNA"/>
</dbReference>
<dbReference type="EMBL" id="CM001222">
    <property type="protein sequence ID" value="KEH25820.1"/>
    <property type="molecule type" value="Genomic_DNA"/>
</dbReference>
<dbReference type="RefSeq" id="XP_013451792.1">
    <property type="nucleotide sequence ID" value="XM_013596338.1"/>
</dbReference>
<dbReference type="SMR" id="Q8H0P8"/>
<dbReference type="STRING" id="3880.Q8H0P8"/>
<dbReference type="PaxDb" id="3880-AES83897"/>
<dbReference type="EnsemblPlants" id="rna35341">
    <property type="protein sequence ID" value="RHN50982.1"/>
    <property type="gene ID" value="gene35341"/>
</dbReference>
<dbReference type="GeneID" id="25496067"/>
<dbReference type="Gramene" id="rna35341">
    <property type="protein sequence ID" value="RHN50982.1"/>
    <property type="gene ID" value="gene35341"/>
</dbReference>
<dbReference type="KEGG" id="mtr:25496067"/>
<dbReference type="eggNOG" id="ENOG502QVUV">
    <property type="taxonomic scope" value="Eukaryota"/>
</dbReference>
<dbReference type="HOGENOM" id="CLU_078642_1_0_1"/>
<dbReference type="OMA" id="DYDMPAS"/>
<dbReference type="OrthoDB" id="431169at2759"/>
<dbReference type="Proteomes" id="UP000002051">
    <property type="component" value="Chromosome 6"/>
</dbReference>
<dbReference type="GO" id="GO:0016607">
    <property type="term" value="C:nuclear speck"/>
    <property type="evidence" value="ECO:0007669"/>
    <property type="project" value="UniProtKB-SubCell"/>
</dbReference>
<dbReference type="GO" id="GO:0003729">
    <property type="term" value="F:mRNA binding"/>
    <property type="evidence" value="ECO:0000318"/>
    <property type="project" value="GO_Central"/>
</dbReference>
<dbReference type="CDD" id="cd21618">
    <property type="entry name" value="RRM_AtNSRA_like"/>
    <property type="match status" value="1"/>
</dbReference>
<dbReference type="Gene3D" id="3.30.70.330">
    <property type="match status" value="1"/>
</dbReference>
<dbReference type="InterPro" id="IPR012677">
    <property type="entry name" value="Nucleotide-bd_a/b_plait_sf"/>
</dbReference>
<dbReference type="InterPro" id="IPR035979">
    <property type="entry name" value="RBD_domain_sf"/>
</dbReference>
<dbReference type="InterPro" id="IPR000504">
    <property type="entry name" value="RRM_dom"/>
</dbReference>
<dbReference type="PANTHER" id="PTHR10501">
    <property type="entry name" value="U1 SMALL NUCLEAR RIBONUCLEOPROTEIN A/U2 SMALL NUCLEAR RIBONUCLEOPROTEIN B"/>
    <property type="match status" value="1"/>
</dbReference>
<dbReference type="Pfam" id="PF00076">
    <property type="entry name" value="RRM_1"/>
    <property type="match status" value="1"/>
</dbReference>
<dbReference type="SMART" id="SM00360">
    <property type="entry name" value="RRM"/>
    <property type="match status" value="1"/>
</dbReference>
<dbReference type="SUPFAM" id="SSF54928">
    <property type="entry name" value="RNA-binding domain, RBD"/>
    <property type="match status" value="1"/>
</dbReference>
<dbReference type="PROSITE" id="PS50102">
    <property type="entry name" value="RRM"/>
    <property type="match status" value="1"/>
</dbReference>
<comment type="function">
    <text evidence="3">RNA-binding protein interacting with the enod40 RNA.</text>
</comment>
<comment type="subcellular location">
    <subcellularLocation>
        <location evidence="3">Nucleus speckle</location>
    </subcellularLocation>
    <subcellularLocation>
        <location evidence="3">Cytoplasmic granule</location>
    </subcellularLocation>
    <text evidence="3">Exported into cytoplasmic granules during nodule development (PubMed:15037734). Relocalizes to cytoplasmic granules when associated with enod40 RNA (PubMed:15037734).</text>
</comment>
<comment type="tissue specificity">
    <text evidence="3">Ubiquitous.</text>
</comment>
<comment type="developmental stage">
    <text evidence="3">Constitutively expressed (PubMed:15037734). Not regulated during nodule development (PubMed:15037734).</text>
</comment>
<sequence>MADGYWNRQQSLLPHSGLHKRPRPDYEMPASGLPSGNEMHYLSREEDRSGHPMVKDSKTIGSAYDRYLQGQVPSFTSGEASTVGALGLQRGIGGLPNHSLSDPSAMIGRHGGGGPDLAPNGRGMNYGFQPPMDPVSRHGPEPALLPPDASPTLYIEGLPSDCTRREVAHIFRPFVGYREVRLVSKEAKHRGDPLILCFVDFANPACAATALSALQGYKVDEINPESSHLRLQFSRYPGPRSGGGPRSSGPPRGGHGSRGRR</sequence>
<accession>Q8H0P8</accession>
<proteinExistence type="evidence at transcript level"/>